<keyword id="KW-0963">Cytoplasm</keyword>
<keyword id="KW-0378">Hydrolase</keyword>
<keyword id="KW-0479">Metal-binding</keyword>
<keyword id="KW-0533">Nickel</keyword>
<comment type="catalytic activity">
    <reaction evidence="1">
        <text>urea + 2 H2O + H(+) = hydrogencarbonate + 2 NH4(+)</text>
        <dbReference type="Rhea" id="RHEA:20557"/>
        <dbReference type="ChEBI" id="CHEBI:15377"/>
        <dbReference type="ChEBI" id="CHEBI:15378"/>
        <dbReference type="ChEBI" id="CHEBI:16199"/>
        <dbReference type="ChEBI" id="CHEBI:17544"/>
        <dbReference type="ChEBI" id="CHEBI:28938"/>
        <dbReference type="EC" id="3.5.1.5"/>
    </reaction>
</comment>
<comment type="cofactor">
    <cofactor evidence="1">
        <name>Ni cation</name>
        <dbReference type="ChEBI" id="CHEBI:25516"/>
    </cofactor>
    <text evidence="1">Binds 2 nickel ions per subunit.</text>
</comment>
<comment type="pathway">
    <text evidence="1">Nitrogen metabolism; urea degradation; CO(2) and NH(3) from urea (urease route): step 1/1.</text>
</comment>
<comment type="subunit">
    <text evidence="1">Heterotrimer of UreA (gamma), UreB (beta) and UreC (alpha) subunits. Three heterotrimers associate to form the active enzyme.</text>
</comment>
<comment type="subcellular location">
    <subcellularLocation>
        <location evidence="1">Cytoplasm</location>
    </subcellularLocation>
</comment>
<comment type="PTM">
    <text evidence="1">Carboxylation allows a single lysine to coordinate two nickel ions.</text>
</comment>
<comment type="similarity">
    <text evidence="1">Belongs to the metallo-dependent hydrolases superfamily. Urease alpha subunit family.</text>
</comment>
<reference key="1">
    <citation type="submission" date="2008-02" db="EMBL/GenBank/DDBJ databases">
        <title>Complete sequence of Pseudomonas putida W619.</title>
        <authorList>
            <person name="Copeland A."/>
            <person name="Lucas S."/>
            <person name="Lapidus A."/>
            <person name="Barry K."/>
            <person name="Detter J.C."/>
            <person name="Glavina del Rio T."/>
            <person name="Dalin E."/>
            <person name="Tice H."/>
            <person name="Pitluck S."/>
            <person name="Chain P."/>
            <person name="Malfatti S."/>
            <person name="Shin M."/>
            <person name="Vergez L."/>
            <person name="Schmutz J."/>
            <person name="Larimer F."/>
            <person name="Land M."/>
            <person name="Hauser L."/>
            <person name="Kyrpides N."/>
            <person name="Kim E."/>
            <person name="Taghavi S."/>
            <person name="Vangronsveld D."/>
            <person name="van der Lelie D."/>
            <person name="Richardson P."/>
        </authorList>
    </citation>
    <scope>NUCLEOTIDE SEQUENCE [LARGE SCALE GENOMIC DNA]</scope>
    <source>
        <strain>W619</strain>
    </source>
</reference>
<gene>
    <name evidence="1" type="primary">ureC</name>
    <name type="ordered locus">PputW619_2417</name>
</gene>
<accession>B1J815</accession>
<organism>
    <name type="scientific">Pseudomonas putida (strain W619)</name>
    <dbReference type="NCBI Taxonomy" id="390235"/>
    <lineage>
        <taxon>Bacteria</taxon>
        <taxon>Pseudomonadati</taxon>
        <taxon>Pseudomonadota</taxon>
        <taxon>Gammaproteobacteria</taxon>
        <taxon>Pseudomonadales</taxon>
        <taxon>Pseudomonadaceae</taxon>
        <taxon>Pseudomonas</taxon>
    </lineage>
</organism>
<proteinExistence type="inferred from homology"/>
<sequence>MSRISRRAYADMFGPTVGDRVRLADTALWVEVEKDFTVYGEEVKFGGGKVIRDGMGQGQMLAAQAMDLVLTNALIIDHWGIVKADIGVKHGRIAAIGKAGNPDVQPGVTVPVGPGTEVIAAEGKIVTAGGIDSHIHFICPQQVEEALTSGVTTFIGGGTGPATGTNATTCTPGPWYLARMLQAADSLPINIGLLGKGNASRPEALREQIAAGAVGLKLHEDWGSTPAAIDCCLSVAEEMDIQVAIHTDTLNESGCIEDTLAAIGDRTIHTFHTEGAGGGHAPDIIRAAGQANVLPSSTNPTLPYTVNTVDEHLDMLMVCHHLDPSIAEDVAFAESRIRRETIAAEDILHDMGAFAMTSSDSQAMGRVGEVVLRTWQVAHQMKVRRGPLAPDSSYSDNFRVKRYIAKYTLNPALTHGIAHEVGSVEVGKLADLVLWSPAFFAVKPALVIKGGMIVTAPMGDINGSIPTPQPVHYRPMFGALGAARHATRMTFLPQAAMDRGLAQELGLQSLIGVAHGCRRVRKADMVHNTLQPVIEVDSQTYQVRADGELLVCEPASELPLAQRYFLF</sequence>
<name>URE1_PSEPW</name>
<feature type="chain" id="PRO_1000188888" description="Urease subunit alpha">
    <location>
        <begin position="1"/>
        <end position="567"/>
    </location>
</feature>
<feature type="domain" description="Urease" evidence="1">
    <location>
        <begin position="129"/>
        <end position="567"/>
    </location>
</feature>
<feature type="active site" description="Proton donor" evidence="1">
    <location>
        <position position="320"/>
    </location>
</feature>
<feature type="binding site" evidence="1">
    <location>
        <position position="134"/>
    </location>
    <ligand>
        <name>Ni(2+)</name>
        <dbReference type="ChEBI" id="CHEBI:49786"/>
        <label>1</label>
    </ligand>
</feature>
<feature type="binding site" evidence="1">
    <location>
        <position position="136"/>
    </location>
    <ligand>
        <name>Ni(2+)</name>
        <dbReference type="ChEBI" id="CHEBI:49786"/>
        <label>1</label>
    </ligand>
</feature>
<feature type="binding site" description="via carbamate group" evidence="1">
    <location>
        <position position="217"/>
    </location>
    <ligand>
        <name>Ni(2+)</name>
        <dbReference type="ChEBI" id="CHEBI:49786"/>
        <label>1</label>
    </ligand>
</feature>
<feature type="binding site" description="via carbamate group" evidence="1">
    <location>
        <position position="217"/>
    </location>
    <ligand>
        <name>Ni(2+)</name>
        <dbReference type="ChEBI" id="CHEBI:49786"/>
        <label>2</label>
    </ligand>
</feature>
<feature type="binding site" evidence="1">
    <location>
        <position position="219"/>
    </location>
    <ligand>
        <name>substrate</name>
    </ligand>
</feature>
<feature type="binding site" evidence="1">
    <location>
        <position position="246"/>
    </location>
    <ligand>
        <name>Ni(2+)</name>
        <dbReference type="ChEBI" id="CHEBI:49786"/>
        <label>2</label>
    </ligand>
</feature>
<feature type="binding site" evidence="1">
    <location>
        <position position="272"/>
    </location>
    <ligand>
        <name>Ni(2+)</name>
        <dbReference type="ChEBI" id="CHEBI:49786"/>
        <label>2</label>
    </ligand>
</feature>
<feature type="binding site" evidence="1">
    <location>
        <position position="360"/>
    </location>
    <ligand>
        <name>Ni(2+)</name>
        <dbReference type="ChEBI" id="CHEBI:49786"/>
        <label>1</label>
    </ligand>
</feature>
<feature type="modified residue" description="N6-carboxylysine" evidence="1">
    <location>
        <position position="217"/>
    </location>
</feature>
<protein>
    <recommendedName>
        <fullName evidence="1">Urease subunit alpha</fullName>
        <ecNumber evidence="1">3.5.1.5</ecNumber>
    </recommendedName>
    <alternativeName>
        <fullName evidence="1">Urea amidohydrolase subunit alpha</fullName>
    </alternativeName>
</protein>
<dbReference type="EC" id="3.5.1.5" evidence="1"/>
<dbReference type="EMBL" id="CP000949">
    <property type="protein sequence ID" value="ACA72917.1"/>
    <property type="molecule type" value="Genomic_DNA"/>
</dbReference>
<dbReference type="SMR" id="B1J815"/>
<dbReference type="STRING" id="390235.PputW619_2417"/>
<dbReference type="KEGG" id="ppw:PputW619_2417"/>
<dbReference type="eggNOG" id="COG0804">
    <property type="taxonomic scope" value="Bacteria"/>
</dbReference>
<dbReference type="HOGENOM" id="CLU_000980_0_0_6"/>
<dbReference type="OrthoDB" id="9802793at2"/>
<dbReference type="UniPathway" id="UPA00258">
    <property type="reaction ID" value="UER00370"/>
</dbReference>
<dbReference type="GO" id="GO:0005737">
    <property type="term" value="C:cytoplasm"/>
    <property type="evidence" value="ECO:0007669"/>
    <property type="project" value="UniProtKB-SubCell"/>
</dbReference>
<dbReference type="GO" id="GO:0016151">
    <property type="term" value="F:nickel cation binding"/>
    <property type="evidence" value="ECO:0007669"/>
    <property type="project" value="UniProtKB-UniRule"/>
</dbReference>
<dbReference type="GO" id="GO:0009039">
    <property type="term" value="F:urease activity"/>
    <property type="evidence" value="ECO:0007669"/>
    <property type="project" value="UniProtKB-UniRule"/>
</dbReference>
<dbReference type="GO" id="GO:0043419">
    <property type="term" value="P:urea catabolic process"/>
    <property type="evidence" value="ECO:0007669"/>
    <property type="project" value="UniProtKB-UniRule"/>
</dbReference>
<dbReference type="CDD" id="cd00375">
    <property type="entry name" value="Urease_alpha"/>
    <property type="match status" value="1"/>
</dbReference>
<dbReference type="Gene3D" id="3.20.20.140">
    <property type="entry name" value="Metal-dependent hydrolases"/>
    <property type="match status" value="1"/>
</dbReference>
<dbReference type="Gene3D" id="2.30.40.10">
    <property type="entry name" value="Urease, subunit C, domain 1"/>
    <property type="match status" value="1"/>
</dbReference>
<dbReference type="HAMAP" id="MF_01953">
    <property type="entry name" value="Urease_alpha"/>
    <property type="match status" value="1"/>
</dbReference>
<dbReference type="InterPro" id="IPR006680">
    <property type="entry name" value="Amidohydro-rel"/>
</dbReference>
<dbReference type="InterPro" id="IPR011059">
    <property type="entry name" value="Metal-dep_hydrolase_composite"/>
</dbReference>
<dbReference type="InterPro" id="IPR032466">
    <property type="entry name" value="Metal_Hydrolase"/>
</dbReference>
<dbReference type="InterPro" id="IPR011612">
    <property type="entry name" value="Urease_alpha_N_dom"/>
</dbReference>
<dbReference type="InterPro" id="IPR050112">
    <property type="entry name" value="Urease_alpha_subunit"/>
</dbReference>
<dbReference type="InterPro" id="IPR017950">
    <property type="entry name" value="Urease_AS"/>
</dbReference>
<dbReference type="InterPro" id="IPR005848">
    <property type="entry name" value="Urease_asu"/>
</dbReference>
<dbReference type="InterPro" id="IPR017951">
    <property type="entry name" value="Urease_asu_c"/>
</dbReference>
<dbReference type="InterPro" id="IPR029754">
    <property type="entry name" value="Urease_Ni-bd"/>
</dbReference>
<dbReference type="NCBIfam" id="NF009685">
    <property type="entry name" value="PRK13206.1"/>
    <property type="match status" value="1"/>
</dbReference>
<dbReference type="NCBIfam" id="NF009686">
    <property type="entry name" value="PRK13207.1"/>
    <property type="match status" value="1"/>
</dbReference>
<dbReference type="NCBIfam" id="TIGR01792">
    <property type="entry name" value="urease_alph"/>
    <property type="match status" value="1"/>
</dbReference>
<dbReference type="PANTHER" id="PTHR43440">
    <property type="entry name" value="UREASE"/>
    <property type="match status" value="1"/>
</dbReference>
<dbReference type="PANTHER" id="PTHR43440:SF1">
    <property type="entry name" value="UREASE"/>
    <property type="match status" value="1"/>
</dbReference>
<dbReference type="Pfam" id="PF01979">
    <property type="entry name" value="Amidohydro_1"/>
    <property type="match status" value="1"/>
</dbReference>
<dbReference type="Pfam" id="PF00449">
    <property type="entry name" value="Urease_alpha"/>
    <property type="match status" value="1"/>
</dbReference>
<dbReference type="PRINTS" id="PR01752">
    <property type="entry name" value="UREASE"/>
</dbReference>
<dbReference type="SUPFAM" id="SSF51338">
    <property type="entry name" value="Composite domain of metallo-dependent hydrolases"/>
    <property type="match status" value="2"/>
</dbReference>
<dbReference type="SUPFAM" id="SSF51556">
    <property type="entry name" value="Metallo-dependent hydrolases"/>
    <property type="match status" value="1"/>
</dbReference>
<dbReference type="PROSITE" id="PS01120">
    <property type="entry name" value="UREASE_1"/>
    <property type="match status" value="1"/>
</dbReference>
<dbReference type="PROSITE" id="PS00145">
    <property type="entry name" value="UREASE_2"/>
    <property type="match status" value="1"/>
</dbReference>
<dbReference type="PROSITE" id="PS51368">
    <property type="entry name" value="UREASE_3"/>
    <property type="match status" value="1"/>
</dbReference>
<evidence type="ECO:0000255" key="1">
    <source>
        <dbReference type="HAMAP-Rule" id="MF_01953"/>
    </source>
</evidence>